<comment type="function">
    <text evidence="1">Cooperates with the reticulon proteins and tubule-shaping DP1 family proteins to generate and maintain the structure of the tubular endoplasmic reticulum network. Has GTPase activity, which is required for its function in ER organization.</text>
</comment>
<comment type="subcellular location">
    <subcellularLocation>
        <location evidence="1">Endoplasmic reticulum membrane</location>
        <topology evidence="1">Multi-pass membrane protein</topology>
    </subcellularLocation>
    <text evidence="1">Enriched in the cortical ER. Concentrated in punctae along the ER tubules.</text>
</comment>
<comment type="similarity">
    <text evidence="2">Belongs to the TRAFAC class dynamin-like GTPase superfamily. GB1/RHD3 GTPase family. RHD3 subfamily.</text>
</comment>
<accession>A1D2K1</accession>
<feature type="chain" id="PRO_0000384988" description="Protein sey1">
    <location>
        <begin position="1"/>
        <end position="864"/>
    </location>
</feature>
<feature type="topological domain" description="Cytoplasmic" evidence="1">
    <location>
        <begin position="1"/>
        <end position="747"/>
    </location>
</feature>
<feature type="transmembrane region" description="Helical" evidence="1">
    <location>
        <begin position="748"/>
        <end position="768"/>
    </location>
</feature>
<feature type="topological domain" description="Lumenal" evidence="1">
    <location>
        <begin position="769"/>
        <end position="771"/>
    </location>
</feature>
<feature type="transmembrane region" description="Helical" evidence="1">
    <location>
        <begin position="772"/>
        <end position="792"/>
    </location>
</feature>
<feature type="topological domain" description="Cytoplasmic" evidence="1">
    <location>
        <begin position="793"/>
        <end position="864"/>
    </location>
</feature>
<feature type="domain" description="GB1/RHD3-type G" evidence="2">
    <location>
        <begin position="49"/>
        <end position="305"/>
    </location>
</feature>
<feature type="region of interest" description="Disordered" evidence="3">
    <location>
        <begin position="675"/>
        <end position="701"/>
    </location>
</feature>
<feature type="region of interest" description="Disordered" evidence="3">
    <location>
        <begin position="830"/>
        <end position="864"/>
    </location>
</feature>
<feature type="coiled-coil region" evidence="1">
    <location>
        <begin position="480"/>
        <end position="506"/>
    </location>
</feature>
<feature type="compositionally biased region" description="Acidic residues" evidence="3">
    <location>
        <begin position="688"/>
        <end position="701"/>
    </location>
</feature>
<feature type="binding site" evidence="1">
    <location>
        <begin position="59"/>
        <end position="66"/>
    </location>
    <ligand>
        <name>GTP</name>
        <dbReference type="ChEBI" id="CHEBI:37565"/>
    </ligand>
</feature>
<organism>
    <name type="scientific">Neosartorya fischeri (strain ATCC 1020 / DSM 3700 / CBS 544.65 / FGSC A1164 / JCM 1740 / NRRL 181 / WB 181)</name>
    <name type="common">Aspergillus fischerianus</name>
    <dbReference type="NCBI Taxonomy" id="331117"/>
    <lineage>
        <taxon>Eukaryota</taxon>
        <taxon>Fungi</taxon>
        <taxon>Dikarya</taxon>
        <taxon>Ascomycota</taxon>
        <taxon>Pezizomycotina</taxon>
        <taxon>Eurotiomycetes</taxon>
        <taxon>Eurotiomycetidae</taxon>
        <taxon>Eurotiales</taxon>
        <taxon>Aspergillaceae</taxon>
        <taxon>Aspergillus</taxon>
        <taxon>Aspergillus subgen. Fumigati</taxon>
    </lineage>
</organism>
<sequence length="864" mass="97383">MATNGHFATIGVDNDKTAYEHGVQVIDENKEFNPNISKYLSLENVTPAGFNYHLISVFGSQSTGKSTLLNHLFGTHFSVMSDSERRQTTKGIWMSKNKKEGEATVDPTLRMADNILVMDVEGTDGRERGEDQDFERKSALFALATSEVLIVNIWEHQVGLYQGANMGLLKTVFEVNLQLFLKDKNTTHRSLLFFVIRDFVGATPLKNLQKTLMEDMARLWESISKPPGLESSSVHDYFDFQFYGLPHKSYQPEQFVAETKKLSLRFREGQRDPSMDARRGEFSEGGVFLPEYHRRIPADGFSRYAEGIWDQIVNNKDLDLPTQQELLAQFRCDEILREVMIAFDEAIVPFEEKQSQSARLGEPEVLGGLGAAMRSSRAKAVKNFETEASRYHKGVYQRKRAELESKVDTRLKALLQGQLNAAHKSGINEFSEAVSSSVKSGQKQGTGYDFAEIVNEEVKKAIAKFEDVARSTVVEGTTWSDYKQELALYEKELADVSGRLRREEMRRLANRVERWVQSRLGESVGLEFNALGSGRAGGGAPETGEKPLEKAFWDRVWNVFVETVLDAERRFTDRASSFDASLEEVDVGLWRLRRKSWGVLRAKIDEEMTEGNLLLKLRENFEDKFRYDDAGVPRIWRPTDDIEGIYTRARESTLTLIPLLSRFRLAETSAPPPLDRWIGHTPSSATPADEEDLPPIGGVDEEEGKSLDEEMMILSEAKRQELTVRFKKAADGVYVEAKRSAIGGMTQVPLYFYGLLLALGWNEIIAVLRNPAYFFLLFVCAVGAYVTYQLNLWGPIIKMTEAASSQALVEGKKRLREFLESSDTGRQAIAMSAGSGRSGEQYELSDLSKKGKARTSADEDMDDL</sequence>
<gene>
    <name type="primary">sey1</name>
    <name type="ORF">NFIA_013330</name>
</gene>
<keyword id="KW-0175">Coiled coil</keyword>
<keyword id="KW-0256">Endoplasmic reticulum</keyword>
<keyword id="KW-0342">GTP-binding</keyword>
<keyword id="KW-0378">Hydrolase</keyword>
<keyword id="KW-0472">Membrane</keyword>
<keyword id="KW-0547">Nucleotide-binding</keyword>
<keyword id="KW-1185">Reference proteome</keyword>
<keyword id="KW-0812">Transmembrane</keyword>
<keyword id="KW-1133">Transmembrane helix</keyword>
<name>SEY1_NEOFI</name>
<dbReference type="EC" id="3.6.5.-" evidence="1"/>
<dbReference type="EMBL" id="DS027688">
    <property type="protein sequence ID" value="EAW22644.1"/>
    <property type="molecule type" value="Genomic_DNA"/>
</dbReference>
<dbReference type="RefSeq" id="XP_001264541.1">
    <property type="nucleotide sequence ID" value="XM_001264540.1"/>
</dbReference>
<dbReference type="SMR" id="A1D2K1"/>
<dbReference type="STRING" id="331117.A1D2K1"/>
<dbReference type="EnsemblFungi" id="EAW22644">
    <property type="protein sequence ID" value="EAW22644"/>
    <property type="gene ID" value="NFIA_013330"/>
</dbReference>
<dbReference type="GeneID" id="4591352"/>
<dbReference type="KEGG" id="nfi:NFIA_013330"/>
<dbReference type="VEuPathDB" id="FungiDB:NFIA_013330"/>
<dbReference type="eggNOG" id="KOG2203">
    <property type="taxonomic scope" value="Eukaryota"/>
</dbReference>
<dbReference type="HOGENOM" id="CLU_011270_0_0_1"/>
<dbReference type="OMA" id="PIIKMTE"/>
<dbReference type="OrthoDB" id="1597724at2759"/>
<dbReference type="Proteomes" id="UP000006702">
    <property type="component" value="Unassembled WGS sequence"/>
</dbReference>
<dbReference type="GO" id="GO:0005789">
    <property type="term" value="C:endoplasmic reticulum membrane"/>
    <property type="evidence" value="ECO:0007669"/>
    <property type="project" value="UniProtKB-SubCell"/>
</dbReference>
<dbReference type="GO" id="GO:0005525">
    <property type="term" value="F:GTP binding"/>
    <property type="evidence" value="ECO:0007669"/>
    <property type="project" value="UniProtKB-UniRule"/>
</dbReference>
<dbReference type="GO" id="GO:0003924">
    <property type="term" value="F:GTPase activity"/>
    <property type="evidence" value="ECO:0007669"/>
    <property type="project" value="UniProtKB-UniRule"/>
</dbReference>
<dbReference type="GO" id="GO:0016320">
    <property type="term" value="P:endoplasmic reticulum membrane fusion"/>
    <property type="evidence" value="ECO:0007669"/>
    <property type="project" value="TreeGrafter"/>
</dbReference>
<dbReference type="CDD" id="cd01851">
    <property type="entry name" value="GBP"/>
    <property type="match status" value="1"/>
</dbReference>
<dbReference type="FunFam" id="3.40.50.300:FF:000727">
    <property type="entry name" value="Protein SEY1 homolog"/>
    <property type="match status" value="1"/>
</dbReference>
<dbReference type="Gene3D" id="3.40.50.300">
    <property type="entry name" value="P-loop containing nucleotide triphosphate hydrolases"/>
    <property type="match status" value="1"/>
</dbReference>
<dbReference type="HAMAP" id="MF_03109">
    <property type="entry name" value="Sey1"/>
    <property type="match status" value="1"/>
</dbReference>
<dbReference type="InterPro" id="IPR030386">
    <property type="entry name" value="G_GB1_RHD3_dom"/>
</dbReference>
<dbReference type="InterPro" id="IPR027417">
    <property type="entry name" value="P-loop_NTPase"/>
</dbReference>
<dbReference type="InterPro" id="IPR008803">
    <property type="entry name" value="RHD3/Sey1"/>
</dbReference>
<dbReference type="InterPro" id="IPR046758">
    <property type="entry name" value="Sey1/RHD3-like_3HB"/>
</dbReference>
<dbReference type="PANTHER" id="PTHR45923">
    <property type="entry name" value="PROTEIN SEY1"/>
    <property type="match status" value="1"/>
</dbReference>
<dbReference type="PANTHER" id="PTHR45923:SF2">
    <property type="entry name" value="PROTEIN SEY1"/>
    <property type="match status" value="1"/>
</dbReference>
<dbReference type="Pfam" id="PF05879">
    <property type="entry name" value="RHD3_GTPase"/>
    <property type="match status" value="1"/>
</dbReference>
<dbReference type="Pfam" id="PF20428">
    <property type="entry name" value="Sey1_3HB"/>
    <property type="match status" value="1"/>
</dbReference>
<dbReference type="SUPFAM" id="SSF52540">
    <property type="entry name" value="P-loop containing nucleoside triphosphate hydrolases"/>
    <property type="match status" value="1"/>
</dbReference>
<dbReference type="PROSITE" id="PS51715">
    <property type="entry name" value="G_GB1_RHD3"/>
    <property type="match status" value="1"/>
</dbReference>
<reference key="1">
    <citation type="journal article" date="2008" name="PLoS Genet.">
        <title>Genomic islands in the pathogenic filamentous fungus Aspergillus fumigatus.</title>
        <authorList>
            <person name="Fedorova N.D."/>
            <person name="Khaldi N."/>
            <person name="Joardar V.S."/>
            <person name="Maiti R."/>
            <person name="Amedeo P."/>
            <person name="Anderson M.J."/>
            <person name="Crabtree J."/>
            <person name="Silva J.C."/>
            <person name="Badger J.H."/>
            <person name="Albarraq A."/>
            <person name="Angiuoli S."/>
            <person name="Bussey H."/>
            <person name="Bowyer P."/>
            <person name="Cotty P.J."/>
            <person name="Dyer P.S."/>
            <person name="Egan A."/>
            <person name="Galens K."/>
            <person name="Fraser-Liggett C.M."/>
            <person name="Haas B.J."/>
            <person name="Inman J.M."/>
            <person name="Kent R."/>
            <person name="Lemieux S."/>
            <person name="Malavazi I."/>
            <person name="Orvis J."/>
            <person name="Roemer T."/>
            <person name="Ronning C.M."/>
            <person name="Sundaram J.P."/>
            <person name="Sutton G."/>
            <person name="Turner G."/>
            <person name="Venter J.C."/>
            <person name="White O.R."/>
            <person name="Whitty B.R."/>
            <person name="Youngman P."/>
            <person name="Wolfe K.H."/>
            <person name="Goldman G.H."/>
            <person name="Wortman J.R."/>
            <person name="Jiang B."/>
            <person name="Denning D.W."/>
            <person name="Nierman W.C."/>
        </authorList>
    </citation>
    <scope>NUCLEOTIDE SEQUENCE [LARGE SCALE GENOMIC DNA]</scope>
    <source>
        <strain>ATCC 1020 / DSM 3700 / CBS 544.65 / FGSC A1164 / JCM 1740 / NRRL 181 / WB 181</strain>
    </source>
</reference>
<proteinExistence type="inferred from homology"/>
<protein>
    <recommendedName>
        <fullName evidence="1">Protein sey1</fullName>
        <ecNumber evidence="1">3.6.5.-</ecNumber>
    </recommendedName>
</protein>
<evidence type="ECO:0000255" key="1">
    <source>
        <dbReference type="HAMAP-Rule" id="MF_03109"/>
    </source>
</evidence>
<evidence type="ECO:0000255" key="2">
    <source>
        <dbReference type="PROSITE-ProRule" id="PRU01052"/>
    </source>
</evidence>
<evidence type="ECO:0000256" key="3">
    <source>
        <dbReference type="SAM" id="MobiDB-lite"/>
    </source>
</evidence>